<dbReference type="EC" id="6.3.5.-" evidence="1"/>
<dbReference type="EMBL" id="CP001598">
    <property type="protein sequence ID" value="ACQ47046.1"/>
    <property type="molecule type" value="Genomic_DNA"/>
</dbReference>
<dbReference type="RefSeq" id="WP_000086999.1">
    <property type="nucleotide sequence ID" value="NC_012659.1"/>
</dbReference>
<dbReference type="SMR" id="C3PBQ3"/>
<dbReference type="GeneID" id="93010705"/>
<dbReference type="KEGG" id="bai:BAA_0376"/>
<dbReference type="HOGENOM" id="CLU_105899_6_1_9"/>
<dbReference type="GO" id="GO:0050566">
    <property type="term" value="F:asparaginyl-tRNA synthase (glutamine-hydrolyzing) activity"/>
    <property type="evidence" value="ECO:0007669"/>
    <property type="project" value="RHEA"/>
</dbReference>
<dbReference type="GO" id="GO:0005524">
    <property type="term" value="F:ATP binding"/>
    <property type="evidence" value="ECO:0007669"/>
    <property type="project" value="UniProtKB-KW"/>
</dbReference>
<dbReference type="GO" id="GO:0050567">
    <property type="term" value="F:glutaminyl-tRNA synthase (glutamine-hydrolyzing) activity"/>
    <property type="evidence" value="ECO:0007669"/>
    <property type="project" value="UniProtKB-UniRule"/>
</dbReference>
<dbReference type="GO" id="GO:0070681">
    <property type="term" value="P:glutaminyl-tRNAGln biosynthesis via transamidation"/>
    <property type="evidence" value="ECO:0007669"/>
    <property type="project" value="TreeGrafter"/>
</dbReference>
<dbReference type="GO" id="GO:0006450">
    <property type="term" value="P:regulation of translational fidelity"/>
    <property type="evidence" value="ECO:0007669"/>
    <property type="project" value="InterPro"/>
</dbReference>
<dbReference type="GO" id="GO:0006412">
    <property type="term" value="P:translation"/>
    <property type="evidence" value="ECO:0007669"/>
    <property type="project" value="UniProtKB-UniRule"/>
</dbReference>
<dbReference type="Gene3D" id="1.10.20.60">
    <property type="entry name" value="Glu-tRNAGln amidotransferase C subunit, N-terminal domain"/>
    <property type="match status" value="1"/>
</dbReference>
<dbReference type="HAMAP" id="MF_00122">
    <property type="entry name" value="GatC"/>
    <property type="match status" value="1"/>
</dbReference>
<dbReference type="InterPro" id="IPR036113">
    <property type="entry name" value="Asp/Glu-ADT_sf_sub_c"/>
</dbReference>
<dbReference type="InterPro" id="IPR003837">
    <property type="entry name" value="GatC"/>
</dbReference>
<dbReference type="NCBIfam" id="TIGR00135">
    <property type="entry name" value="gatC"/>
    <property type="match status" value="1"/>
</dbReference>
<dbReference type="PANTHER" id="PTHR15004">
    <property type="entry name" value="GLUTAMYL-TRNA(GLN) AMIDOTRANSFERASE SUBUNIT C, MITOCHONDRIAL"/>
    <property type="match status" value="1"/>
</dbReference>
<dbReference type="PANTHER" id="PTHR15004:SF0">
    <property type="entry name" value="GLUTAMYL-TRNA(GLN) AMIDOTRANSFERASE SUBUNIT C, MITOCHONDRIAL"/>
    <property type="match status" value="1"/>
</dbReference>
<dbReference type="Pfam" id="PF02686">
    <property type="entry name" value="GatC"/>
    <property type="match status" value="1"/>
</dbReference>
<dbReference type="SUPFAM" id="SSF141000">
    <property type="entry name" value="Glu-tRNAGln amidotransferase C subunit"/>
    <property type="match status" value="1"/>
</dbReference>
<evidence type="ECO:0000255" key="1">
    <source>
        <dbReference type="HAMAP-Rule" id="MF_00122"/>
    </source>
</evidence>
<accession>C3PBQ3</accession>
<gene>
    <name evidence="1" type="primary">gatC</name>
    <name type="ordered locus">BAA_0376</name>
</gene>
<keyword id="KW-0067">ATP-binding</keyword>
<keyword id="KW-0436">Ligase</keyword>
<keyword id="KW-0547">Nucleotide-binding</keyword>
<keyword id="KW-0648">Protein biosynthesis</keyword>
<proteinExistence type="inferred from homology"/>
<sequence length="96" mass="10866">MSRISVENVKHVAHLARLAITDQEAEKFQKQLDAIVTFAEQLNELDTTDVKPTTHVLTMKNVMREDVPEKGLPVEEVLKNAPDHKDNQIRVPAVLE</sequence>
<name>GATC_BACAA</name>
<protein>
    <recommendedName>
        <fullName evidence="1">Aspartyl/glutamyl-tRNA(Asn/Gln) amidotransferase subunit C</fullName>
        <shortName evidence="1">Asp/Glu-ADT subunit C</shortName>
        <ecNumber evidence="1">6.3.5.-</ecNumber>
    </recommendedName>
</protein>
<reference key="1">
    <citation type="submission" date="2009-04" db="EMBL/GenBank/DDBJ databases">
        <title>Genome sequence of Bacillus anthracis A0248.</title>
        <authorList>
            <person name="Dodson R.J."/>
            <person name="Munk A.C."/>
            <person name="Bruce D."/>
            <person name="Detter C."/>
            <person name="Tapia R."/>
            <person name="Sutton G."/>
            <person name="Sims D."/>
            <person name="Brettin T."/>
        </authorList>
    </citation>
    <scope>NUCLEOTIDE SEQUENCE [LARGE SCALE GENOMIC DNA]</scope>
    <source>
        <strain>A0248</strain>
    </source>
</reference>
<organism>
    <name type="scientific">Bacillus anthracis (strain A0248)</name>
    <dbReference type="NCBI Taxonomy" id="592021"/>
    <lineage>
        <taxon>Bacteria</taxon>
        <taxon>Bacillati</taxon>
        <taxon>Bacillota</taxon>
        <taxon>Bacilli</taxon>
        <taxon>Bacillales</taxon>
        <taxon>Bacillaceae</taxon>
        <taxon>Bacillus</taxon>
        <taxon>Bacillus cereus group</taxon>
    </lineage>
</organism>
<feature type="chain" id="PRO_1000122551" description="Aspartyl/glutamyl-tRNA(Asn/Gln) amidotransferase subunit C">
    <location>
        <begin position="1"/>
        <end position="96"/>
    </location>
</feature>
<comment type="function">
    <text evidence="1">Allows the formation of correctly charged Asn-tRNA(Asn) or Gln-tRNA(Gln) through the transamidation of misacylated Asp-tRNA(Asn) or Glu-tRNA(Gln) in organisms which lack either or both of asparaginyl-tRNA or glutaminyl-tRNA synthetases. The reaction takes place in the presence of glutamine and ATP through an activated phospho-Asp-tRNA(Asn) or phospho-Glu-tRNA(Gln).</text>
</comment>
<comment type="catalytic activity">
    <reaction evidence="1">
        <text>L-glutamyl-tRNA(Gln) + L-glutamine + ATP + H2O = L-glutaminyl-tRNA(Gln) + L-glutamate + ADP + phosphate + H(+)</text>
        <dbReference type="Rhea" id="RHEA:17521"/>
        <dbReference type="Rhea" id="RHEA-COMP:9681"/>
        <dbReference type="Rhea" id="RHEA-COMP:9684"/>
        <dbReference type="ChEBI" id="CHEBI:15377"/>
        <dbReference type="ChEBI" id="CHEBI:15378"/>
        <dbReference type="ChEBI" id="CHEBI:29985"/>
        <dbReference type="ChEBI" id="CHEBI:30616"/>
        <dbReference type="ChEBI" id="CHEBI:43474"/>
        <dbReference type="ChEBI" id="CHEBI:58359"/>
        <dbReference type="ChEBI" id="CHEBI:78520"/>
        <dbReference type="ChEBI" id="CHEBI:78521"/>
        <dbReference type="ChEBI" id="CHEBI:456216"/>
    </reaction>
</comment>
<comment type="catalytic activity">
    <reaction evidence="1">
        <text>L-aspartyl-tRNA(Asn) + L-glutamine + ATP + H2O = L-asparaginyl-tRNA(Asn) + L-glutamate + ADP + phosphate + 2 H(+)</text>
        <dbReference type="Rhea" id="RHEA:14513"/>
        <dbReference type="Rhea" id="RHEA-COMP:9674"/>
        <dbReference type="Rhea" id="RHEA-COMP:9677"/>
        <dbReference type="ChEBI" id="CHEBI:15377"/>
        <dbReference type="ChEBI" id="CHEBI:15378"/>
        <dbReference type="ChEBI" id="CHEBI:29985"/>
        <dbReference type="ChEBI" id="CHEBI:30616"/>
        <dbReference type="ChEBI" id="CHEBI:43474"/>
        <dbReference type="ChEBI" id="CHEBI:58359"/>
        <dbReference type="ChEBI" id="CHEBI:78515"/>
        <dbReference type="ChEBI" id="CHEBI:78516"/>
        <dbReference type="ChEBI" id="CHEBI:456216"/>
    </reaction>
</comment>
<comment type="subunit">
    <text evidence="1">Heterotrimer of A, B and C subunits.</text>
</comment>
<comment type="similarity">
    <text evidence="1">Belongs to the GatC family.</text>
</comment>